<sequence length="346" mass="37711">MNPHATPVLVLSLALGTTITISSNHWVLAWTGLEINTLAIIPLISKSHHPRAVEAATKYFLTQAAASALVLFSSMTNAWATGQWDITQLNHPTSCLLLTAAIAIKLGLVPFHFWFPEVLQGSPLMTALLLSTLMKFPPLTLLLMTSKSLNPALLTTMALASAALGGWMGLNQTQTRKILAFSSISHLGWIAIILVYSPKLALLTFYLYTIMTSAVFMALNKIKALNLSMVLTSWTKTPVLNATLMLVLLSLAGLPPLTGFMPKWLIIQELTKQEMTPAAMAIAMLSLLSLFFYLRLAYHSTITLPPNSSNHMKQWYTSKPPSTPTAILASLSILLLPLSPMIHAIV</sequence>
<comment type="function">
    <text evidence="1">Core subunit of the mitochondrial membrane respiratory chain NADH dehydrogenase (Complex I) that is believed to belong to the minimal assembly required for catalysis. Complex I functions in the transfer of electrons from NADH to the respiratory chain. The immediate electron acceptor for the enzyme is believed to be ubiquinone (By similarity).</text>
</comment>
<comment type="catalytic activity">
    <reaction>
        <text>a ubiquinone + NADH + 5 H(+)(in) = a ubiquinol + NAD(+) + 4 H(+)(out)</text>
        <dbReference type="Rhea" id="RHEA:29091"/>
        <dbReference type="Rhea" id="RHEA-COMP:9565"/>
        <dbReference type="Rhea" id="RHEA-COMP:9566"/>
        <dbReference type="ChEBI" id="CHEBI:15378"/>
        <dbReference type="ChEBI" id="CHEBI:16389"/>
        <dbReference type="ChEBI" id="CHEBI:17976"/>
        <dbReference type="ChEBI" id="CHEBI:57540"/>
        <dbReference type="ChEBI" id="CHEBI:57945"/>
        <dbReference type="EC" id="7.1.1.2"/>
    </reaction>
</comment>
<comment type="subcellular location">
    <subcellularLocation>
        <location>Mitochondrion inner membrane</location>
        <topology>Multi-pass membrane protein</topology>
    </subcellularLocation>
</comment>
<comment type="similarity">
    <text evidence="3">Belongs to the complex I subunit 2 family.</text>
</comment>
<dbReference type="EC" id="7.1.1.2"/>
<dbReference type="EMBL" id="AF059163">
    <property type="protein sequence ID" value="AAC14857.1"/>
    <property type="molecule type" value="Genomic_DNA"/>
</dbReference>
<dbReference type="SMR" id="O63794"/>
<dbReference type="GO" id="GO:0005743">
    <property type="term" value="C:mitochondrial inner membrane"/>
    <property type="evidence" value="ECO:0007669"/>
    <property type="project" value="UniProtKB-SubCell"/>
</dbReference>
<dbReference type="GO" id="GO:0008137">
    <property type="term" value="F:NADH dehydrogenase (ubiquinone) activity"/>
    <property type="evidence" value="ECO:0007669"/>
    <property type="project" value="UniProtKB-EC"/>
</dbReference>
<dbReference type="GO" id="GO:0006120">
    <property type="term" value="P:mitochondrial electron transport, NADH to ubiquinone"/>
    <property type="evidence" value="ECO:0007669"/>
    <property type="project" value="InterPro"/>
</dbReference>
<dbReference type="InterPro" id="IPR050175">
    <property type="entry name" value="Complex_I_Subunit_2"/>
</dbReference>
<dbReference type="InterPro" id="IPR010933">
    <property type="entry name" value="NADH_DH_su2_C"/>
</dbReference>
<dbReference type="InterPro" id="IPR003917">
    <property type="entry name" value="NADH_UbQ_OxRdtase_chain2"/>
</dbReference>
<dbReference type="InterPro" id="IPR001750">
    <property type="entry name" value="ND/Mrp_TM"/>
</dbReference>
<dbReference type="PANTHER" id="PTHR46552">
    <property type="entry name" value="NADH-UBIQUINONE OXIDOREDUCTASE CHAIN 2"/>
    <property type="match status" value="1"/>
</dbReference>
<dbReference type="PANTHER" id="PTHR46552:SF1">
    <property type="entry name" value="NADH-UBIQUINONE OXIDOREDUCTASE CHAIN 2"/>
    <property type="match status" value="1"/>
</dbReference>
<dbReference type="Pfam" id="PF06444">
    <property type="entry name" value="NADH_dehy_S2_C"/>
    <property type="match status" value="1"/>
</dbReference>
<dbReference type="Pfam" id="PF00361">
    <property type="entry name" value="Proton_antipo_M"/>
    <property type="match status" value="1"/>
</dbReference>
<dbReference type="PRINTS" id="PR01436">
    <property type="entry name" value="NADHDHGNASE2"/>
</dbReference>
<geneLocation type="mitochondrion"/>
<evidence type="ECO:0000250" key="1"/>
<evidence type="ECO:0000255" key="2"/>
<evidence type="ECO:0000305" key="3"/>
<gene>
    <name type="primary">MT-ND2</name>
    <name type="synonym">MTND2</name>
    <name type="synonym">NADH2</name>
    <name type="synonym">ND2</name>
</gene>
<feature type="chain" id="PRO_0000117542" description="NADH-ubiquinone oxidoreductase chain 2">
    <location>
        <begin position="1"/>
        <end position="346"/>
    </location>
</feature>
<feature type="transmembrane region" description="Helical" evidence="2">
    <location>
        <begin position="1"/>
        <end position="21"/>
    </location>
</feature>
<feature type="transmembrane region" description="Helical" evidence="2">
    <location>
        <begin position="25"/>
        <end position="45"/>
    </location>
</feature>
<feature type="transmembrane region" description="Helical" evidence="2">
    <location>
        <begin position="60"/>
        <end position="80"/>
    </location>
</feature>
<feature type="transmembrane region" description="Helical" evidence="2">
    <location>
        <begin position="95"/>
        <end position="115"/>
    </location>
</feature>
<feature type="transmembrane region" description="Helical" evidence="2">
    <location>
        <begin position="124"/>
        <end position="144"/>
    </location>
</feature>
<feature type="transmembrane region" description="Helical" evidence="2">
    <location>
        <begin position="149"/>
        <end position="169"/>
    </location>
</feature>
<feature type="transmembrane region" description="Helical" evidence="2">
    <location>
        <begin position="178"/>
        <end position="195"/>
    </location>
</feature>
<feature type="transmembrane region" description="Helical" evidence="2">
    <location>
        <begin position="200"/>
        <end position="219"/>
    </location>
</feature>
<feature type="transmembrane region" description="Helical" evidence="2">
    <location>
        <begin position="242"/>
        <end position="262"/>
    </location>
</feature>
<feature type="transmembrane region" description="Helical" evidence="2">
    <location>
        <begin position="274"/>
        <end position="294"/>
    </location>
</feature>
<feature type="transmembrane region" description="Helical" evidence="2">
    <location>
        <begin position="326"/>
        <end position="346"/>
    </location>
</feature>
<protein>
    <recommendedName>
        <fullName>NADH-ubiquinone oxidoreductase chain 2</fullName>
        <ecNumber>7.1.1.2</ecNumber>
    </recommendedName>
    <alternativeName>
        <fullName>NADH dehydrogenase subunit 2</fullName>
    </alternativeName>
</protein>
<name>NU2M_MARAE</name>
<organism>
    <name type="scientific">Mareca americana</name>
    <name type="common">American wigeon</name>
    <name type="synonym">Anas americana</name>
    <dbReference type="NCBI Taxonomy" id="75832"/>
    <lineage>
        <taxon>Eukaryota</taxon>
        <taxon>Metazoa</taxon>
        <taxon>Chordata</taxon>
        <taxon>Craniata</taxon>
        <taxon>Vertebrata</taxon>
        <taxon>Euteleostomi</taxon>
        <taxon>Archelosauria</taxon>
        <taxon>Archosauria</taxon>
        <taxon>Dinosauria</taxon>
        <taxon>Saurischia</taxon>
        <taxon>Theropoda</taxon>
        <taxon>Coelurosauria</taxon>
        <taxon>Aves</taxon>
        <taxon>Neognathae</taxon>
        <taxon>Galloanserae</taxon>
        <taxon>Anseriformes</taxon>
        <taxon>Anatidae</taxon>
        <taxon>Anatinae</taxon>
        <taxon>Mareca</taxon>
    </lineage>
</organism>
<keyword id="KW-0249">Electron transport</keyword>
<keyword id="KW-0472">Membrane</keyword>
<keyword id="KW-0496">Mitochondrion</keyword>
<keyword id="KW-0999">Mitochondrion inner membrane</keyword>
<keyword id="KW-0520">NAD</keyword>
<keyword id="KW-0679">Respiratory chain</keyword>
<keyword id="KW-1278">Translocase</keyword>
<keyword id="KW-0812">Transmembrane</keyword>
<keyword id="KW-1133">Transmembrane helix</keyword>
<keyword id="KW-0813">Transport</keyword>
<keyword id="KW-0830">Ubiquinone</keyword>
<reference key="1">
    <citation type="journal article" date="1998" name="Mol. Phylogenet. Evol.">
        <title>Comparing molecular evolution in two mitochondrial protein coding genes (cytochrome b and ND2) in the dabbling ducks (Tribe: Anatini).</title>
        <authorList>
            <person name="Johnson K.P."/>
            <person name="Sorenson M.D."/>
        </authorList>
    </citation>
    <scope>NUCLEOTIDE SEQUENCE [GENOMIC DNA]</scope>
</reference>
<accession>O63794</accession>
<proteinExistence type="inferred from homology"/>